<sequence>MDFALLPPEVNSARMYTGPGAGSLLAAAGGWDSLAAELATTAEAYGSVLSGLAALHWRGPAAESMAVTAAPYIGWLYTTAEKTQQTAIQARAAALAFEQAYAMTLPPPVVAANRIQLLALIATNFFGQNTAAIAATEAQYAEMWAQDAAAMYGYATASAAAALLTPFSPPRQTTNPAGLTAQAAAVSQATDPLSLLIETVTQALQALTIPSFIPEDFTFLDAIFAGYATVGVTQDVESFVAGTIGAESNLGLLNVGDENPAEVTPGDFGIGELVSATSPGGGVSASGAGGAASVGNTVLASVGRANSIGQLSVPPSWAAPSTRPVSALSPAGLTTLPGTDVAEHGMPGVPGVPVAAGRASGVLPRYGVRLTVMAHPPAAG</sequence>
<keyword id="KW-0007">Acetylation</keyword>
<keyword id="KW-0998">Cell outer membrane</keyword>
<keyword id="KW-0472">Membrane</keyword>
<keyword id="KW-1185">Reference proteome</keyword>
<keyword id="KW-0813">Transport</keyword>
<keyword id="KW-0843">Virulence</keyword>
<organism>
    <name type="scientific">Mycobacterium tuberculosis (strain CDC 1551 / Oshkosh)</name>
    <dbReference type="NCBI Taxonomy" id="83331"/>
    <lineage>
        <taxon>Bacteria</taxon>
        <taxon>Bacillati</taxon>
        <taxon>Actinomycetota</taxon>
        <taxon>Actinomycetes</taxon>
        <taxon>Mycobacteriales</taxon>
        <taxon>Mycobacteriaceae</taxon>
        <taxon>Mycobacterium</taxon>
        <taxon>Mycobacterium tuberculosis complex</taxon>
    </lineage>
</organism>
<protein>
    <recommendedName>
        <fullName evidence="2">Transporter PPE51</fullName>
    </recommendedName>
    <alternativeName>
        <fullName evidence="2">Proline-proline-glutamate family protein 51</fullName>
        <shortName evidence="2">PPE family protein 51</shortName>
    </alternativeName>
    <alternativeName>
        <fullName evidence="2">Protein PPE51</fullName>
    </alternativeName>
</protein>
<proteinExistence type="inferred from homology"/>
<comment type="function">
    <text evidence="1">Small molecule-selective channel required for the uptake of nutrients across the outer mycomembrane. Transports glycerol and glucose. Involved in sensitivity to M.tuberculosis growth inhibitory agrichemical 3,3-bis-di(methylsulfonyl)propionamide (3bMP1). Transports maltose and lactose disaccharides. Involved in sensitivity to bactericidal thio-disaccharide T-6 compound (1,6-anhydro-3-deoxy-4-S-(2,3,4,6-tetra-O-acetyl-beta-D-glucopyranosyl)-D-glycero-hexopyranos-2-ulose). Transports extracellular trehalose, a component of the cell envelope, and trehalose analog, 6-azido trehalose (6-TreAz), which has antimycobacterial activity.</text>
</comment>
<comment type="function">
    <text evidence="1">Plays a role in response to starvation and stress, likely environment within the host. Inhibits canonical autophagy in infected mouse RAW264.7 macrophages. Inhibits autophagy and enhances intracellular bacterial survival when expressed in human macrophage-like THP-1 cells. Inhibits Toll-like receptor 2 (TLR2)-dependent signaling leading to autophagy inhibition, increased intracellular bacterial survival, reduced phagocytosis and reduced secretion of interleukin 6 (IL-6) and IL-1 in infected mouse primary bone marrow-derived macrophage (BMDM) cells. Required for virulence and persistence in the lungs and spleens of intranasally infected C57BL/6J mice. Blocks the antibacterial effects of TLR2 activation, suppresses MHC class II-dependent antigen presentation, and reduces IFN-gamma and TNF-alpha-producing CD4(+) T cells during infection in C57BL/6J mice.</text>
</comment>
<comment type="subunit">
    <text evidence="1">Interacts with PE19 and PE25.</text>
</comment>
<comment type="subcellular location">
    <subcellularLocation>
        <location evidence="1">Cell outer membrane</location>
    </subcellularLocation>
</comment>
<comment type="induction">
    <text evidence="1">By glycerol supplementation as the sole carbon source in the minimal growth medium.</text>
</comment>
<comment type="similarity">
    <text evidence="2">Belongs to the mycobacterial PPE family.</text>
</comment>
<reference key="1">
    <citation type="journal article" date="2002" name="J. Bacteriol.">
        <title>Whole-genome comparison of Mycobacterium tuberculosis clinical and laboratory strains.</title>
        <authorList>
            <person name="Fleischmann R.D."/>
            <person name="Alland D."/>
            <person name="Eisen J.A."/>
            <person name="Carpenter L."/>
            <person name="White O."/>
            <person name="Peterson J.D."/>
            <person name="DeBoy R.T."/>
            <person name="Dodson R.J."/>
            <person name="Gwinn M.L."/>
            <person name="Haft D.H."/>
            <person name="Hickey E.K."/>
            <person name="Kolonay J.F."/>
            <person name="Nelson W.C."/>
            <person name="Umayam L.A."/>
            <person name="Ermolaeva M.D."/>
            <person name="Salzberg S.L."/>
            <person name="Delcher A."/>
            <person name="Utterback T.R."/>
            <person name="Weidman J.F."/>
            <person name="Khouri H.M."/>
            <person name="Gill J."/>
            <person name="Mikula A."/>
            <person name="Bishai W."/>
            <person name="Jacobs W.R. Jr."/>
            <person name="Venter J.C."/>
            <person name="Fraser C.M."/>
        </authorList>
    </citation>
    <scope>NUCLEOTIDE SEQUENCE [LARGE SCALE GENOMIC DNA]</scope>
    <source>
        <strain>CDC 1551 / Oshkosh</strain>
    </source>
</reference>
<dbReference type="EMBL" id="AE000516">
    <property type="protein sequence ID" value="AAK47561.1"/>
    <property type="molecule type" value="Genomic_DNA"/>
</dbReference>
<dbReference type="PIR" id="A70646">
    <property type="entry name" value="A70646"/>
</dbReference>
<dbReference type="RefSeq" id="WP_003416381.1">
    <property type="nucleotide sequence ID" value="NZ_KK341227.1"/>
</dbReference>
<dbReference type="SMR" id="P9WHY2"/>
<dbReference type="KEGG" id="mtc:MT3221"/>
<dbReference type="PATRIC" id="fig|83331.31.peg.3471"/>
<dbReference type="HOGENOM" id="CLU_000243_0_0_11"/>
<dbReference type="Proteomes" id="UP000001020">
    <property type="component" value="Chromosome"/>
</dbReference>
<dbReference type="GO" id="GO:0009279">
    <property type="term" value="C:cell outer membrane"/>
    <property type="evidence" value="ECO:0000250"/>
    <property type="project" value="UniProtKB"/>
</dbReference>
<dbReference type="GO" id="GO:0015267">
    <property type="term" value="F:channel activity"/>
    <property type="evidence" value="ECO:0000250"/>
    <property type="project" value="UniProtKB"/>
</dbReference>
<dbReference type="GO" id="GO:0055056">
    <property type="term" value="F:D-glucose transmembrane transporter activity"/>
    <property type="evidence" value="ECO:0000250"/>
    <property type="project" value="UniProtKB"/>
</dbReference>
<dbReference type="GO" id="GO:0015254">
    <property type="term" value="F:glycerol channel activity"/>
    <property type="evidence" value="ECO:0000250"/>
    <property type="project" value="UniProtKB"/>
</dbReference>
<dbReference type="GO" id="GO:0015168">
    <property type="term" value="F:glycerol transmembrane transporter activity"/>
    <property type="evidence" value="ECO:0000250"/>
    <property type="project" value="UniProtKB"/>
</dbReference>
<dbReference type="GO" id="GO:0015155">
    <property type="term" value="F:lactose transmembrane transporter activity"/>
    <property type="evidence" value="ECO:0000250"/>
    <property type="project" value="UniProtKB"/>
</dbReference>
<dbReference type="GO" id="GO:0015574">
    <property type="term" value="F:trehalose transmembrane transporter activity"/>
    <property type="evidence" value="ECO:0000250"/>
    <property type="project" value="UniProtKB"/>
</dbReference>
<dbReference type="GO" id="GO:0071466">
    <property type="term" value="P:cellular response to xenobiotic stimulus"/>
    <property type="evidence" value="ECO:0000250"/>
    <property type="project" value="UniProtKB"/>
</dbReference>
<dbReference type="GO" id="GO:1904659">
    <property type="term" value="P:D-glucose transmembrane transport"/>
    <property type="evidence" value="ECO:0000250"/>
    <property type="project" value="UniProtKB"/>
</dbReference>
<dbReference type="GO" id="GO:0015793">
    <property type="term" value="P:glycerol transmembrane transport"/>
    <property type="evidence" value="ECO:0000250"/>
    <property type="project" value="UniProtKB"/>
</dbReference>
<dbReference type="GO" id="GO:0015767">
    <property type="term" value="P:lactose transport"/>
    <property type="evidence" value="ECO:0000250"/>
    <property type="project" value="UniProtKB"/>
</dbReference>
<dbReference type="GO" id="GO:1904981">
    <property type="term" value="P:maltose transmembrane transport"/>
    <property type="evidence" value="ECO:0000250"/>
    <property type="project" value="UniProtKB"/>
</dbReference>
<dbReference type="GO" id="GO:0035821">
    <property type="term" value="P:modulation of process of another organism"/>
    <property type="evidence" value="ECO:0000250"/>
    <property type="project" value="UniProtKB"/>
</dbReference>
<dbReference type="GO" id="GO:0042594">
    <property type="term" value="P:response to starvation"/>
    <property type="evidence" value="ECO:0000250"/>
    <property type="project" value="UniProtKB"/>
</dbReference>
<dbReference type="GO" id="GO:0042783">
    <property type="term" value="P:symbiont-mediated evasion of host immune response"/>
    <property type="evidence" value="ECO:0000250"/>
    <property type="project" value="UniProtKB"/>
</dbReference>
<dbReference type="GO" id="GO:0140321">
    <property type="term" value="P:symbiont-mediated suppression of host autophagy"/>
    <property type="evidence" value="ECO:0000250"/>
    <property type="project" value="UniProtKB"/>
</dbReference>
<dbReference type="GO" id="GO:0015771">
    <property type="term" value="P:trehalose transport"/>
    <property type="evidence" value="ECO:0000250"/>
    <property type="project" value="UniProtKB"/>
</dbReference>
<dbReference type="FunFam" id="1.20.1260.20:FF:000001">
    <property type="entry name" value="PPE family protein PPE41"/>
    <property type="match status" value="1"/>
</dbReference>
<dbReference type="Gene3D" id="1.20.1260.20">
    <property type="entry name" value="PPE superfamily"/>
    <property type="match status" value="1"/>
</dbReference>
<dbReference type="InterPro" id="IPR022171">
    <property type="entry name" value="PPE_C"/>
</dbReference>
<dbReference type="InterPro" id="IPR000030">
    <property type="entry name" value="PPE_dom"/>
</dbReference>
<dbReference type="InterPro" id="IPR038332">
    <property type="entry name" value="PPE_sf"/>
</dbReference>
<dbReference type="PANTHER" id="PTHR46766">
    <property type="entry name" value="GLUTAMINE-RICH PROTEIN 2"/>
    <property type="match status" value="1"/>
</dbReference>
<dbReference type="PANTHER" id="PTHR46766:SF1">
    <property type="entry name" value="GLUTAMINE-RICH PROTEIN 2"/>
    <property type="match status" value="1"/>
</dbReference>
<dbReference type="Pfam" id="PF00823">
    <property type="entry name" value="PPE"/>
    <property type="match status" value="1"/>
</dbReference>
<dbReference type="Pfam" id="PF12484">
    <property type="entry name" value="PPE-SVP"/>
    <property type="match status" value="1"/>
</dbReference>
<dbReference type="SUPFAM" id="SSF140459">
    <property type="entry name" value="PE/PPE dimer-like"/>
    <property type="match status" value="1"/>
</dbReference>
<accession>P9WHY2</accession>
<accession>L0TD92</accession>
<accession>Q6MX06</accession>
<accession>Q7D623</accession>
<feature type="chain" id="PRO_0000428102" description="Transporter PPE51">
    <location>
        <begin position="1"/>
        <end position="380"/>
    </location>
</feature>
<feature type="modified residue" description="N-acetylmethionine" evidence="1">
    <location>
        <position position="1"/>
    </location>
</feature>
<name>PPE51_MYCTO</name>
<evidence type="ECO:0000250" key="1">
    <source>
        <dbReference type="UniProtKB" id="P9WHY3"/>
    </source>
</evidence>
<evidence type="ECO:0000305" key="2"/>
<gene>
    <name type="primary">PPE51</name>
    <name type="ordered locus">MT3221</name>
</gene>